<name>RPIA_BURM7</name>
<sequence>MTQDELKRLVGEAAARYVTENVPQGAVIGVGTGSTANCFIDALAAVKDRYRGAVSSSVATTERLKSHGIKVFDLNEIESLQVYVDGADEIDGSGAMIKGGGGALTREKIVASVAETFVCIADASKRVAVLGQFPLPVEVVPMARTAIGRRLAALGGVPVLRVKQDGAPYVTDNGNEILDVKGLRIDDPRALEAAINGWPGVVTVGLFAQRGADLCLLGTERGVETLRYAAH</sequence>
<comment type="function">
    <text evidence="1">Catalyzes the reversible conversion of ribose-5-phosphate to ribulose 5-phosphate.</text>
</comment>
<comment type="catalytic activity">
    <reaction evidence="1">
        <text>aldehydo-D-ribose 5-phosphate = D-ribulose 5-phosphate</text>
        <dbReference type="Rhea" id="RHEA:14657"/>
        <dbReference type="ChEBI" id="CHEBI:58121"/>
        <dbReference type="ChEBI" id="CHEBI:58273"/>
        <dbReference type="EC" id="5.3.1.6"/>
    </reaction>
</comment>
<comment type="pathway">
    <text evidence="1">Carbohydrate degradation; pentose phosphate pathway; D-ribose 5-phosphate from D-ribulose 5-phosphate (non-oxidative stage): step 1/1.</text>
</comment>
<comment type="subunit">
    <text evidence="1">Homodimer.</text>
</comment>
<comment type="similarity">
    <text evidence="1">Belongs to the ribose 5-phosphate isomerase family.</text>
</comment>
<keyword id="KW-0413">Isomerase</keyword>
<evidence type="ECO:0000255" key="1">
    <source>
        <dbReference type="HAMAP-Rule" id="MF_00170"/>
    </source>
</evidence>
<protein>
    <recommendedName>
        <fullName evidence="1">Ribose-5-phosphate isomerase A</fullName>
        <ecNumber evidence="1">5.3.1.6</ecNumber>
    </recommendedName>
    <alternativeName>
        <fullName evidence="1">Phosphoriboisomerase A</fullName>
        <shortName evidence="1">PRI</shortName>
    </alternativeName>
</protein>
<organism>
    <name type="scientific">Burkholderia mallei (strain NCTC 10247)</name>
    <dbReference type="NCBI Taxonomy" id="320389"/>
    <lineage>
        <taxon>Bacteria</taxon>
        <taxon>Pseudomonadati</taxon>
        <taxon>Pseudomonadota</taxon>
        <taxon>Betaproteobacteria</taxon>
        <taxon>Burkholderiales</taxon>
        <taxon>Burkholderiaceae</taxon>
        <taxon>Burkholderia</taxon>
        <taxon>pseudomallei group</taxon>
    </lineage>
</organism>
<reference key="1">
    <citation type="journal article" date="2010" name="Genome Biol. Evol.">
        <title>Continuing evolution of Burkholderia mallei through genome reduction and large-scale rearrangements.</title>
        <authorList>
            <person name="Losada L."/>
            <person name="Ronning C.M."/>
            <person name="DeShazer D."/>
            <person name="Woods D."/>
            <person name="Fedorova N."/>
            <person name="Kim H.S."/>
            <person name="Shabalina S.A."/>
            <person name="Pearson T.R."/>
            <person name="Brinkac L."/>
            <person name="Tan P."/>
            <person name="Nandi T."/>
            <person name="Crabtree J."/>
            <person name="Badger J."/>
            <person name="Beckstrom-Sternberg S."/>
            <person name="Saqib M."/>
            <person name="Schutzer S.E."/>
            <person name="Keim P."/>
            <person name="Nierman W.C."/>
        </authorList>
    </citation>
    <scope>NUCLEOTIDE SEQUENCE [LARGE SCALE GENOMIC DNA]</scope>
    <source>
        <strain>NCTC 10247</strain>
    </source>
</reference>
<dbReference type="EC" id="5.3.1.6" evidence="1"/>
<dbReference type="EMBL" id="CP000548">
    <property type="protein sequence ID" value="ABO05931.1"/>
    <property type="molecule type" value="Genomic_DNA"/>
</dbReference>
<dbReference type="RefSeq" id="WP_004192848.1">
    <property type="nucleotide sequence ID" value="NZ_CP007802.1"/>
</dbReference>
<dbReference type="SMR" id="A3MJY8"/>
<dbReference type="GeneID" id="93060124"/>
<dbReference type="KEGG" id="bmaz:BM44_2071"/>
<dbReference type="KEGG" id="bmn:BMA10247_1017"/>
<dbReference type="PATRIC" id="fig|320389.8.peg.2325"/>
<dbReference type="UniPathway" id="UPA00115">
    <property type="reaction ID" value="UER00412"/>
</dbReference>
<dbReference type="GO" id="GO:0005829">
    <property type="term" value="C:cytosol"/>
    <property type="evidence" value="ECO:0007669"/>
    <property type="project" value="TreeGrafter"/>
</dbReference>
<dbReference type="GO" id="GO:0004751">
    <property type="term" value="F:ribose-5-phosphate isomerase activity"/>
    <property type="evidence" value="ECO:0007669"/>
    <property type="project" value="UniProtKB-UniRule"/>
</dbReference>
<dbReference type="GO" id="GO:0006014">
    <property type="term" value="P:D-ribose metabolic process"/>
    <property type="evidence" value="ECO:0007669"/>
    <property type="project" value="TreeGrafter"/>
</dbReference>
<dbReference type="GO" id="GO:0009052">
    <property type="term" value="P:pentose-phosphate shunt, non-oxidative branch"/>
    <property type="evidence" value="ECO:0007669"/>
    <property type="project" value="UniProtKB-UniRule"/>
</dbReference>
<dbReference type="CDD" id="cd01398">
    <property type="entry name" value="RPI_A"/>
    <property type="match status" value="1"/>
</dbReference>
<dbReference type="FunFam" id="3.40.50.1360:FF:000001">
    <property type="entry name" value="Ribose-5-phosphate isomerase A"/>
    <property type="match status" value="1"/>
</dbReference>
<dbReference type="Gene3D" id="3.30.70.260">
    <property type="match status" value="1"/>
</dbReference>
<dbReference type="Gene3D" id="3.40.50.1360">
    <property type="match status" value="1"/>
</dbReference>
<dbReference type="HAMAP" id="MF_00170">
    <property type="entry name" value="Rib_5P_isom_A"/>
    <property type="match status" value="1"/>
</dbReference>
<dbReference type="InterPro" id="IPR037171">
    <property type="entry name" value="NagB/RpiA_transferase-like"/>
</dbReference>
<dbReference type="InterPro" id="IPR020672">
    <property type="entry name" value="Ribose5P_isomerase_typA_subgr"/>
</dbReference>
<dbReference type="InterPro" id="IPR004788">
    <property type="entry name" value="Ribose5P_isomerase_type_A"/>
</dbReference>
<dbReference type="NCBIfam" id="NF001924">
    <property type="entry name" value="PRK00702.1"/>
    <property type="match status" value="1"/>
</dbReference>
<dbReference type="NCBIfam" id="TIGR00021">
    <property type="entry name" value="rpiA"/>
    <property type="match status" value="1"/>
</dbReference>
<dbReference type="PANTHER" id="PTHR11934">
    <property type="entry name" value="RIBOSE-5-PHOSPHATE ISOMERASE"/>
    <property type="match status" value="1"/>
</dbReference>
<dbReference type="PANTHER" id="PTHR11934:SF0">
    <property type="entry name" value="RIBOSE-5-PHOSPHATE ISOMERASE"/>
    <property type="match status" value="1"/>
</dbReference>
<dbReference type="Pfam" id="PF06026">
    <property type="entry name" value="Rib_5-P_isom_A"/>
    <property type="match status" value="1"/>
</dbReference>
<dbReference type="SUPFAM" id="SSF75445">
    <property type="entry name" value="D-ribose-5-phosphate isomerase (RpiA), lid domain"/>
    <property type="match status" value="1"/>
</dbReference>
<dbReference type="SUPFAM" id="SSF100950">
    <property type="entry name" value="NagB/RpiA/CoA transferase-like"/>
    <property type="match status" value="1"/>
</dbReference>
<accession>A3MJY8</accession>
<proteinExistence type="inferred from homology"/>
<feature type="chain" id="PRO_1000016909" description="Ribose-5-phosphate isomerase A">
    <location>
        <begin position="1"/>
        <end position="231"/>
    </location>
</feature>
<feature type="active site" description="Proton acceptor" evidence="1">
    <location>
        <position position="107"/>
    </location>
</feature>
<feature type="binding site" evidence="1">
    <location>
        <begin position="32"/>
        <end position="35"/>
    </location>
    <ligand>
        <name>substrate</name>
    </ligand>
</feature>
<feature type="binding site" evidence="1">
    <location>
        <begin position="85"/>
        <end position="88"/>
    </location>
    <ligand>
        <name>substrate</name>
    </ligand>
</feature>
<feature type="binding site" evidence="1">
    <location>
        <begin position="98"/>
        <end position="101"/>
    </location>
    <ligand>
        <name>substrate</name>
    </ligand>
</feature>
<feature type="binding site" evidence="1">
    <location>
        <position position="125"/>
    </location>
    <ligand>
        <name>substrate</name>
    </ligand>
</feature>
<gene>
    <name evidence="1" type="primary">rpiA</name>
    <name type="ordered locus">BMA10247_1017</name>
</gene>